<evidence type="ECO:0000255" key="1"/>
<evidence type="ECO:0000305" key="2"/>
<accession>P38150</accession>
<accession>D6VQS9</accession>
<name>YB9Z_YEAST</name>
<keyword id="KW-0472">Membrane</keyword>
<keyword id="KW-1185">Reference proteome</keyword>
<keyword id="KW-0812">Transmembrane</keyword>
<keyword id="KW-1133">Transmembrane helix</keyword>
<reference key="1">
    <citation type="journal article" date="1994" name="Yeast">
        <title>The sequence of a 32,420 bp segment located on the right arm of chromosome II from Saccharomyces cerevisiae.</title>
        <authorList>
            <person name="Holmstroem K."/>
            <person name="Brandt T."/>
            <person name="Kallesoe T."/>
        </authorList>
    </citation>
    <scope>NUCLEOTIDE SEQUENCE [GENOMIC DNA]</scope>
    <source>
        <strain>ATCC 204508 / S288c</strain>
    </source>
</reference>
<reference key="2">
    <citation type="journal article" date="1994" name="EMBO J.">
        <title>Complete DNA sequence of yeast chromosome II.</title>
        <authorList>
            <person name="Feldmann H."/>
            <person name="Aigle M."/>
            <person name="Aljinovic G."/>
            <person name="Andre B."/>
            <person name="Baclet M.C."/>
            <person name="Barthe C."/>
            <person name="Baur A."/>
            <person name="Becam A.-M."/>
            <person name="Biteau N."/>
            <person name="Boles E."/>
            <person name="Brandt T."/>
            <person name="Brendel M."/>
            <person name="Brueckner M."/>
            <person name="Bussereau F."/>
            <person name="Christiansen C."/>
            <person name="Contreras R."/>
            <person name="Crouzet M."/>
            <person name="Cziepluch C."/>
            <person name="Demolis N."/>
            <person name="Delaveau T."/>
            <person name="Doignon F."/>
            <person name="Domdey H."/>
            <person name="Duesterhus S."/>
            <person name="Dubois E."/>
            <person name="Dujon B."/>
            <person name="El Bakkoury M."/>
            <person name="Entian K.-D."/>
            <person name="Feuermann M."/>
            <person name="Fiers W."/>
            <person name="Fobo G.M."/>
            <person name="Fritz C."/>
            <person name="Gassenhuber J."/>
            <person name="Glansdorff N."/>
            <person name="Goffeau A."/>
            <person name="Grivell L.A."/>
            <person name="de Haan M."/>
            <person name="Hein C."/>
            <person name="Herbert C.J."/>
            <person name="Hollenberg C.P."/>
            <person name="Holmstroem K."/>
            <person name="Jacq C."/>
            <person name="Jacquet M."/>
            <person name="Jauniaux J.-C."/>
            <person name="Jonniaux J.-L."/>
            <person name="Kallesoee T."/>
            <person name="Kiesau P."/>
            <person name="Kirchrath L."/>
            <person name="Koetter P."/>
            <person name="Korol S."/>
            <person name="Liebl S."/>
            <person name="Logghe M."/>
            <person name="Lohan A.J.E."/>
            <person name="Louis E.J."/>
            <person name="Li Z.Y."/>
            <person name="Maat M.J."/>
            <person name="Mallet L."/>
            <person name="Mannhaupt G."/>
            <person name="Messenguy F."/>
            <person name="Miosga T."/>
            <person name="Molemans F."/>
            <person name="Mueller S."/>
            <person name="Nasr F."/>
            <person name="Obermaier B."/>
            <person name="Perea J."/>
            <person name="Pierard A."/>
            <person name="Piravandi E."/>
            <person name="Pohl F.M."/>
            <person name="Pohl T.M."/>
            <person name="Potier S."/>
            <person name="Proft M."/>
            <person name="Purnelle B."/>
            <person name="Ramezani Rad M."/>
            <person name="Rieger M."/>
            <person name="Rose M."/>
            <person name="Schaaff-Gerstenschlaeger I."/>
            <person name="Scherens B."/>
            <person name="Schwarzlose C."/>
            <person name="Skala J."/>
            <person name="Slonimski P.P."/>
            <person name="Smits P.H.M."/>
            <person name="Souciet J.-L."/>
            <person name="Steensma H.Y."/>
            <person name="Stucka R."/>
            <person name="Urrestarazu L.A."/>
            <person name="van der Aart Q.J.M."/>
            <person name="Van Dyck L."/>
            <person name="Vassarotti A."/>
            <person name="Vetter I."/>
            <person name="Vierendeels F."/>
            <person name="Vissers S."/>
            <person name="Wagner G."/>
            <person name="de Wergifosse P."/>
            <person name="Wolfe K.H."/>
            <person name="Zagulski M."/>
            <person name="Zimmermann F.K."/>
            <person name="Mewes H.-W."/>
            <person name="Kleine K."/>
        </authorList>
    </citation>
    <scope>NUCLEOTIDE SEQUENCE [LARGE SCALE GENOMIC DNA]</scope>
    <source>
        <strain>ATCC 204508 / S288c</strain>
    </source>
</reference>
<reference key="3">
    <citation type="journal article" date="2014" name="G3 (Bethesda)">
        <title>The reference genome sequence of Saccharomyces cerevisiae: Then and now.</title>
        <authorList>
            <person name="Engel S.R."/>
            <person name="Dietrich F.S."/>
            <person name="Fisk D.G."/>
            <person name="Binkley G."/>
            <person name="Balakrishnan R."/>
            <person name="Costanzo M.C."/>
            <person name="Dwight S.S."/>
            <person name="Hitz B.C."/>
            <person name="Karra K."/>
            <person name="Nash R.S."/>
            <person name="Weng S."/>
            <person name="Wong E.D."/>
            <person name="Lloyd P."/>
            <person name="Skrzypek M.S."/>
            <person name="Miyasato S.R."/>
            <person name="Simison M."/>
            <person name="Cherry J.M."/>
        </authorList>
    </citation>
    <scope>GENOME REANNOTATION</scope>
    <source>
        <strain>ATCC 204508 / S288c</strain>
    </source>
</reference>
<dbReference type="EMBL" id="X76053">
    <property type="protein sequence ID" value="CAA53647.1"/>
    <property type="molecule type" value="Genomic_DNA"/>
</dbReference>
<dbReference type="EMBL" id="Z36153">
    <property type="protein sequence ID" value="CAA85248.1"/>
    <property type="molecule type" value="Genomic_DNA"/>
</dbReference>
<dbReference type="EMBL" id="BK006936">
    <property type="protein sequence ID" value="DAA07399.1"/>
    <property type="molecule type" value="Genomic_DNA"/>
</dbReference>
<dbReference type="PIR" id="S44546">
    <property type="entry name" value="S44546"/>
</dbReference>
<dbReference type="RefSeq" id="NP_009843.3">
    <property type="nucleotide sequence ID" value="NM_001178632.3"/>
</dbReference>
<dbReference type="SMR" id="P38150"/>
<dbReference type="BioGRID" id="32978">
    <property type="interactions" value="65"/>
</dbReference>
<dbReference type="DIP" id="DIP-1257N"/>
<dbReference type="FunCoup" id="P38150">
    <property type="interactions" value="35"/>
</dbReference>
<dbReference type="IntAct" id="P38150">
    <property type="interactions" value="4"/>
</dbReference>
<dbReference type="MINT" id="P38150"/>
<dbReference type="STRING" id="4932.YBR284W"/>
<dbReference type="iPTMnet" id="P38150"/>
<dbReference type="PaxDb" id="4932-YBR284W"/>
<dbReference type="PeptideAtlas" id="P38150"/>
<dbReference type="EnsemblFungi" id="YBR284W_mRNA">
    <property type="protein sequence ID" value="YBR284W"/>
    <property type="gene ID" value="YBR284W"/>
</dbReference>
<dbReference type="GeneID" id="852587"/>
<dbReference type="KEGG" id="sce:YBR284W"/>
<dbReference type="AGR" id="SGD:S000000488"/>
<dbReference type="SGD" id="S000000488">
    <property type="gene designation" value="YBR284W"/>
</dbReference>
<dbReference type="VEuPathDB" id="FungiDB:YBR284W"/>
<dbReference type="eggNOG" id="KOG1096">
    <property type="taxonomic scope" value="Eukaryota"/>
</dbReference>
<dbReference type="GeneTree" id="ENSGT00950000183011"/>
<dbReference type="HOGENOM" id="CLU_003782_2_0_1"/>
<dbReference type="InParanoid" id="P38150"/>
<dbReference type="OrthoDB" id="1723809at2759"/>
<dbReference type="BioCyc" id="YEAST:G3O-29204-MONOMER"/>
<dbReference type="Reactome" id="R-SCE-6798695">
    <property type="pathway name" value="Neutrophil degranulation"/>
</dbReference>
<dbReference type="Reactome" id="R-SCE-74217">
    <property type="pathway name" value="Purine salvage"/>
</dbReference>
<dbReference type="BioGRID-ORCS" id="852587">
    <property type="hits" value="0 hits in 10 CRISPR screens"/>
</dbReference>
<dbReference type="PRO" id="PR:P38150"/>
<dbReference type="Proteomes" id="UP000002311">
    <property type="component" value="Chromosome II"/>
</dbReference>
<dbReference type="RNAct" id="P38150">
    <property type="molecule type" value="protein"/>
</dbReference>
<dbReference type="GO" id="GO:0005829">
    <property type="term" value="C:cytosol"/>
    <property type="evidence" value="ECO:0000318"/>
    <property type="project" value="GO_Central"/>
</dbReference>
<dbReference type="GO" id="GO:0016020">
    <property type="term" value="C:membrane"/>
    <property type="evidence" value="ECO:0007669"/>
    <property type="project" value="UniProtKB-SubCell"/>
</dbReference>
<dbReference type="FunFam" id="3.20.20.140:FF:000078">
    <property type="entry name" value="Inactive deaminase YBR284W"/>
    <property type="match status" value="1"/>
</dbReference>
<dbReference type="Gene3D" id="3.20.20.140">
    <property type="entry name" value="Metal-dependent hydrolases"/>
    <property type="match status" value="2"/>
</dbReference>
<dbReference type="InterPro" id="IPR006329">
    <property type="entry name" value="AMPD"/>
</dbReference>
<dbReference type="InterPro" id="IPR032466">
    <property type="entry name" value="Metal_Hydrolase"/>
</dbReference>
<dbReference type="PANTHER" id="PTHR11359">
    <property type="entry name" value="AMP DEAMINASE"/>
    <property type="match status" value="1"/>
</dbReference>
<dbReference type="PANTHER" id="PTHR11359:SF7">
    <property type="entry name" value="INACTIVE DEAMINASE YBR284W-RELATED"/>
    <property type="match status" value="1"/>
</dbReference>
<dbReference type="Pfam" id="PF19326">
    <property type="entry name" value="AMP_deaminase"/>
    <property type="match status" value="1"/>
</dbReference>
<dbReference type="PIRSF" id="PIRSF001251">
    <property type="entry name" value="AMP_deaminase_met"/>
    <property type="match status" value="1"/>
</dbReference>
<dbReference type="SUPFAM" id="SSF51556">
    <property type="entry name" value="Metallo-dependent hydrolases"/>
    <property type="match status" value="1"/>
</dbReference>
<organism>
    <name type="scientific">Saccharomyces cerevisiae (strain ATCC 204508 / S288c)</name>
    <name type="common">Baker's yeast</name>
    <dbReference type="NCBI Taxonomy" id="559292"/>
    <lineage>
        <taxon>Eukaryota</taxon>
        <taxon>Fungi</taxon>
        <taxon>Dikarya</taxon>
        <taxon>Ascomycota</taxon>
        <taxon>Saccharomycotina</taxon>
        <taxon>Saccharomycetes</taxon>
        <taxon>Saccharomycetales</taxon>
        <taxon>Saccharomycetaceae</taxon>
        <taxon>Saccharomyces</taxon>
    </lineage>
</organism>
<protein>
    <recommendedName>
        <fullName>Inactive deaminase YBR284W</fullName>
    </recommendedName>
</protein>
<gene>
    <name type="ordered locus">YBR284W</name>
    <name type="ORF">YBR2021</name>
</gene>
<feature type="chain" id="PRO_0000194415" description="Inactive deaminase YBR284W">
    <location>
        <begin position="1"/>
        <end position="797"/>
    </location>
</feature>
<feature type="transmembrane region" description="Helical" evidence="1">
    <location>
        <begin position="627"/>
        <end position="647"/>
    </location>
</feature>
<proteinExistence type="inferred from homology"/>
<comment type="subcellular location">
    <subcellularLocation>
        <location evidence="2">Membrane</location>
        <topology evidence="2">Single-pass membrane protein</topology>
    </subcellularLocation>
</comment>
<comment type="similarity">
    <text evidence="2">Belongs to the metallo-dependent hydrolases superfamily. Adenosine and AMP deaminases family.</text>
</comment>
<comment type="caution">
    <text evidence="2">Lacks the conserved His residues essential for binding the catalytic zinc ion. Its enzyme activity is therefore unsure.</text>
</comment>
<sequence>MVQNNESVFFVECDSYKESPSTSPIRLDDLDGNDAVSDQGLAFDGDVGITSQARVRNPRAQIFEDSNTDVVLHLDDLDMVPLNTKFDMQMEMGSPMAMPAETPPPVEPLKTKDLAYSSLAHLPSYFFEQTHFRIDRKCLLEMSKLRRNYLTISKQDALSCPQLHSRVAGGYLKPVKEKLFGIRHFLDLEESNTVNLLQDGNYMTELFNSQINIPTFKEFREDFEWCLKIIRDRSLSRFSEKRLQYLVNKFPVFQHLHSKEEMRQSKKVPHKDFYNCRKIDLNLLLSGCFSQWQLTEFIWTKLRKEPDRVIHQAFNGSHITLSQLFKVNFEETGQFFNGLKIIDDSFLEWYKVIYLAKYHLVNDEMEIHTGSHGKQLRYYLIAKTFLEFDNYINGEYLAELLKTFLIKPQEESKYQLCQLSVDFQFYLHYDNSDVDNWWMVFANWLNHYNIFSNNIRWNIRISRIYPELYHTGKVKNFQEYLNLIFKPLFNAENYLHKSLGPILLKFLSQVSSIDLCIQDTDNYIWKNFTAVSCLPKDWTSGGDNPTISQYMYYVYVNLTKLNHIRQALHQNTFTLRSSCSPTSMNRTSQFSNTLNFTEHTEAILNNFLLACGGFLNAENLWNAPPSLVYLFYLSQIPMVVAPLNSIVDSKPTMLQEQAPTGLVLEPSKPYKKNPFMKFFEMGFKISLSSESILYNNSYTKEPIIEEYSVAASIYRLHSADLCELLRNSVITSGFSSTLKNKWLGVSLASHDYFVENTGFVDKWYDCKPNTSLEHNVPIIRRQYRSSTLAGEWRLIIA</sequence>